<protein>
    <recommendedName>
        <fullName evidence="14">Solute carrier family 22 member 16</fullName>
    </recommendedName>
    <alternativeName>
        <fullName evidence="11">Carnitine transporter 2</fullName>
        <shortName evidence="12">CT2</shortName>
    </alternativeName>
    <alternativeName>
        <fullName evidence="12">Fly-like putative transporter 2</fullName>
        <shortName evidence="12">FLIPT2</shortName>
        <shortName evidence="12">Flipt 2</shortName>
    </alternativeName>
    <alternativeName>
        <fullName>Organic cation transporter OKB1</fullName>
    </alternativeName>
    <alternativeName>
        <fullName>Organic cation/carnitine transporter 6</fullName>
    </alternativeName>
</protein>
<evidence type="ECO:0000255" key="1"/>
<evidence type="ECO:0000256" key="2">
    <source>
        <dbReference type="SAM" id="MobiDB-lite"/>
    </source>
</evidence>
<evidence type="ECO:0000269" key="3">
    <source>
    </source>
</evidence>
<evidence type="ECO:0000269" key="4">
    <source>
    </source>
</evidence>
<evidence type="ECO:0000269" key="5">
    <source>
    </source>
</evidence>
<evidence type="ECO:0000269" key="6">
    <source>
    </source>
</evidence>
<evidence type="ECO:0000269" key="7">
    <source>
    </source>
</evidence>
<evidence type="ECO:0000269" key="8">
    <source>
    </source>
</evidence>
<evidence type="ECO:0000269" key="9">
    <source>
    </source>
</evidence>
<evidence type="ECO:0000269" key="10">
    <source>
    </source>
</evidence>
<evidence type="ECO:0000303" key="11">
    <source>
    </source>
</evidence>
<evidence type="ECO:0000303" key="12">
    <source>
    </source>
</evidence>
<evidence type="ECO:0000303" key="13">
    <source>
    </source>
</evidence>
<evidence type="ECO:0000303" key="14">
    <source>
    </source>
</evidence>
<evidence type="ECO:0000305" key="15"/>
<evidence type="ECO:0000312" key="16">
    <source>
        <dbReference type="HGNC" id="HGNC:20302"/>
    </source>
</evidence>
<feature type="chain" id="PRO_0000318991" description="Solute carrier family 22 member 16">
    <location>
        <begin position="1"/>
        <end position="577"/>
    </location>
</feature>
<feature type="transmembrane region" description="Helical" evidence="1">
    <location>
        <begin position="23"/>
        <end position="43"/>
    </location>
</feature>
<feature type="transmembrane region" description="Helical" evidence="1">
    <location>
        <begin position="152"/>
        <end position="172"/>
    </location>
</feature>
<feature type="transmembrane region" description="Helical" evidence="1">
    <location>
        <begin position="183"/>
        <end position="203"/>
    </location>
</feature>
<feature type="transmembrane region" description="Helical" evidence="1">
    <location>
        <begin position="214"/>
        <end position="234"/>
    </location>
</feature>
<feature type="transmembrane region" description="Helical" evidence="1">
    <location>
        <begin position="244"/>
        <end position="264"/>
    </location>
</feature>
<feature type="transmembrane region" description="Helical" evidence="1">
    <location>
        <begin position="268"/>
        <end position="288"/>
    </location>
</feature>
<feature type="transmembrane region" description="Helical" evidence="1">
    <location>
        <begin position="359"/>
        <end position="379"/>
    </location>
</feature>
<feature type="transmembrane region" description="Helical" evidence="1">
    <location>
        <begin position="389"/>
        <end position="409"/>
    </location>
</feature>
<feature type="transmembrane region" description="Helical" evidence="1">
    <location>
        <begin position="416"/>
        <end position="436"/>
    </location>
</feature>
<feature type="transmembrane region" description="Helical" evidence="1">
    <location>
        <begin position="441"/>
        <end position="461"/>
    </location>
</feature>
<feature type="transmembrane region" description="Helical" evidence="1">
    <location>
        <begin position="476"/>
        <end position="496"/>
    </location>
</feature>
<feature type="transmembrane region" description="Helical" evidence="1">
    <location>
        <begin position="501"/>
        <end position="521"/>
    </location>
</feature>
<feature type="region of interest" description="Disordered" evidence="2">
    <location>
        <begin position="543"/>
        <end position="577"/>
    </location>
</feature>
<feature type="compositionally biased region" description="Low complexity" evidence="2">
    <location>
        <begin position="551"/>
        <end position="560"/>
    </location>
</feature>
<feature type="glycosylation site" description="N-linked (GlcNAc...) asparagine" evidence="1">
    <location>
        <position position="57"/>
    </location>
</feature>
<feature type="glycosylation site" description="N-linked (GlcNAc...) asparagine" evidence="1">
    <location>
        <position position="65"/>
    </location>
</feature>
<feature type="glycosylation site" description="N-linked (GlcNAc...) asparagine" evidence="1">
    <location>
        <position position="68"/>
    </location>
</feature>
<feature type="glycosylation site" description="N-linked (GlcNAc...) asparagine" evidence="1">
    <location>
        <position position="108"/>
    </location>
</feature>
<feature type="glycosylation site" description="N-linked (GlcNAc...) asparagine" evidence="1">
    <location>
        <position position="345"/>
    </location>
</feature>
<feature type="glycosylation site" description="N-linked (GlcNAc...) asparagine" evidence="1">
    <location>
        <position position="352"/>
    </location>
</feature>
<feature type="glycosylation site" description="N-linked (GlcNAc...) asparagine" evidence="1">
    <location>
        <position position="546"/>
    </location>
</feature>
<feature type="glycosylation site" description="N-linked (GlcNAc...) asparagine" evidence="1">
    <location>
        <position position="558"/>
    </location>
</feature>
<feature type="splice variant" id="VSP_031336" description="In isoform 2." evidence="11">
    <original>MGSRHFEGIYDHVGHFG</original>
    <variation>MRTLHAVSHPYSNSM</variation>
    <location>
        <begin position="1"/>
        <end position="17"/>
    </location>
</feature>
<feature type="splice variant" id="VSP_031337" description="In isoform 2." evidence="11">
    <location>
        <begin position="58"/>
        <end position="89"/>
    </location>
</feature>
<feature type="splice variant" id="VSP_031338" description="In isoform 3." evidence="13">
    <original>FVGTMALLSGVLTLKLPETLGKRLATTWEEAAKLESENESKSSKLLLTTNNSGLEKTEAITPRDSGLGE</original>
    <variation>LGQHLQE</variation>
    <location>
        <begin position="509"/>
        <end position="577"/>
    </location>
</feature>
<feature type="sequence variant" id="VAR_038930" description="In dbSNP:rs714368.">
    <original>H</original>
    <variation>R</variation>
    <location>
        <position position="49"/>
    </location>
</feature>
<feature type="sequence variant" id="VAR_038931" description="In dbSNP:rs723685.">
    <original>V</original>
    <variation>A</variation>
    <location>
        <position position="252"/>
    </location>
</feature>
<feature type="sequence variant" id="VAR_038932" description="In dbSNP:rs12210538." evidence="4 5 6 7">
    <original>M</original>
    <variation>T</variation>
    <location>
        <position position="409"/>
    </location>
</feature>
<feature type="sequence variant" id="VAR_038933" description="In dbSNP:rs35948062.">
    <original>V</original>
    <variation>I</variation>
    <location>
        <position position="431"/>
    </location>
</feature>
<feature type="sequence conflict" description="In Ref. 1; AAN52928." evidence="15" ref="1">
    <original>V</original>
    <variation>G</variation>
    <location>
        <position position="257"/>
    </location>
</feature>
<organism>
    <name type="scientific">Homo sapiens</name>
    <name type="common">Human</name>
    <dbReference type="NCBI Taxonomy" id="9606"/>
    <lineage>
        <taxon>Eukaryota</taxon>
        <taxon>Metazoa</taxon>
        <taxon>Chordata</taxon>
        <taxon>Craniata</taxon>
        <taxon>Vertebrata</taxon>
        <taxon>Euteleostomi</taxon>
        <taxon>Mammalia</taxon>
        <taxon>Eutheria</taxon>
        <taxon>Euarchontoglires</taxon>
        <taxon>Primates</taxon>
        <taxon>Haplorrhini</taxon>
        <taxon>Catarrhini</taxon>
        <taxon>Hominidae</taxon>
        <taxon>Homo</taxon>
    </lineage>
</organism>
<proteinExistence type="evidence at protein level"/>
<accession>Q86VW1</accession>
<accession>O14567</accession>
<accession>Q5JXM1</accession>
<accession>Q8IUG8</accession>
<accession>Q8IZD5</accession>
<accession>Q96M90</accession>
<accession>Q96RU0</accession>
<dbReference type="EMBL" id="AY145502">
    <property type="protein sequence ID" value="AAN52928.1"/>
    <property type="molecule type" value="mRNA"/>
</dbReference>
<dbReference type="EMBL" id="AB055798">
    <property type="protein sequence ID" value="BAC23062.1"/>
    <property type="molecule type" value="mRNA"/>
</dbReference>
<dbReference type="EMBL" id="AF268892">
    <property type="protein sequence ID" value="AAK58593.1"/>
    <property type="molecule type" value="mRNA"/>
</dbReference>
<dbReference type="EMBL" id="AC002464">
    <property type="protein sequence ID" value="AAB67044.1"/>
    <property type="molecule type" value="Genomic_DNA"/>
</dbReference>
<dbReference type="EMBL" id="AL050350">
    <property type="status" value="NOT_ANNOTATED_CDS"/>
    <property type="molecule type" value="Genomic_DNA"/>
</dbReference>
<dbReference type="EMBL" id="CH471051">
    <property type="protein sequence ID" value="EAW48313.1"/>
    <property type="molecule type" value="Genomic_DNA"/>
</dbReference>
<dbReference type="EMBL" id="BC047565">
    <property type="protein sequence ID" value="AAH47565.1"/>
    <property type="molecule type" value="mRNA"/>
</dbReference>
<dbReference type="EMBL" id="AK057306">
    <property type="protein sequence ID" value="BAB71419.1"/>
    <property type="status" value="ALT_INIT"/>
    <property type="molecule type" value="mRNA"/>
</dbReference>
<dbReference type="CCDS" id="CCDS5084.1">
    <molecule id="Q86VW1-1"/>
</dbReference>
<dbReference type="RefSeq" id="NP_149116.2">
    <molecule id="Q86VW1-1"/>
    <property type="nucleotide sequence ID" value="NM_033125.3"/>
</dbReference>
<dbReference type="RefSeq" id="XP_011534507.1">
    <molecule id="Q86VW1-3"/>
    <property type="nucleotide sequence ID" value="XM_011536205.3"/>
</dbReference>
<dbReference type="RefSeq" id="XP_054212602.1">
    <molecule id="Q86VW1-3"/>
    <property type="nucleotide sequence ID" value="XM_054356627.1"/>
</dbReference>
<dbReference type="SMR" id="Q86VW1"/>
<dbReference type="BioGRID" id="124519">
    <property type="interactions" value="42"/>
</dbReference>
<dbReference type="FunCoup" id="Q86VW1">
    <property type="interactions" value="146"/>
</dbReference>
<dbReference type="IntAct" id="Q86VW1">
    <property type="interactions" value="31"/>
</dbReference>
<dbReference type="STRING" id="9606.ENSP00000357915"/>
<dbReference type="BindingDB" id="Q86VW1"/>
<dbReference type="ChEMBL" id="CHEMBL2073722"/>
<dbReference type="DrugBank" id="DB00997">
    <property type="generic name" value="Doxorubicin"/>
</dbReference>
<dbReference type="DrugBank" id="DB00583">
    <property type="generic name" value="Levocarnitine"/>
</dbReference>
<dbReference type="TCDB" id="2.A.1.19.12">
    <property type="family name" value="the major facilitator superfamily (mfs)"/>
</dbReference>
<dbReference type="GlyCosmos" id="Q86VW1">
    <property type="glycosylation" value="8 sites, No reported glycans"/>
</dbReference>
<dbReference type="GlyGen" id="Q86VW1">
    <property type="glycosylation" value="8 sites"/>
</dbReference>
<dbReference type="iPTMnet" id="Q86VW1"/>
<dbReference type="PhosphoSitePlus" id="Q86VW1"/>
<dbReference type="BioMuta" id="SLC22A16"/>
<dbReference type="DMDM" id="74750474"/>
<dbReference type="jPOST" id="Q86VW1"/>
<dbReference type="MassIVE" id="Q86VW1"/>
<dbReference type="PaxDb" id="9606-ENSP00000357915"/>
<dbReference type="PeptideAtlas" id="Q86VW1"/>
<dbReference type="Antibodypedia" id="32327">
    <property type="antibodies" value="110 antibodies from 22 providers"/>
</dbReference>
<dbReference type="DNASU" id="85413"/>
<dbReference type="Ensembl" id="ENST00000330550.8">
    <molecule id="Q86VW1-2"/>
    <property type="protein sequence ID" value="ENSP00000328583.4"/>
    <property type="gene ID" value="ENSG00000004809.14"/>
</dbReference>
<dbReference type="Ensembl" id="ENST00000368919.8">
    <molecule id="Q86VW1-1"/>
    <property type="protein sequence ID" value="ENSP00000357915.3"/>
    <property type="gene ID" value="ENSG00000004809.14"/>
</dbReference>
<dbReference type="GeneID" id="85413"/>
<dbReference type="KEGG" id="hsa:85413"/>
<dbReference type="MANE-Select" id="ENST00000368919.8">
    <property type="protein sequence ID" value="ENSP00000357915.3"/>
    <property type="RefSeq nucleotide sequence ID" value="NM_033125.4"/>
    <property type="RefSeq protein sequence ID" value="NP_149116.2"/>
</dbReference>
<dbReference type="UCSC" id="uc003puf.5">
    <molecule id="Q86VW1-1"/>
    <property type="organism name" value="human"/>
</dbReference>
<dbReference type="AGR" id="HGNC:20302"/>
<dbReference type="CTD" id="85413"/>
<dbReference type="DisGeNET" id="85413"/>
<dbReference type="GeneCards" id="SLC22A16"/>
<dbReference type="HGNC" id="HGNC:20302">
    <property type="gene designation" value="SLC22A16"/>
</dbReference>
<dbReference type="HPA" id="ENSG00000004809">
    <property type="expression patterns" value="Group enriched (bone marrow, testis)"/>
</dbReference>
<dbReference type="MIM" id="608276">
    <property type="type" value="gene"/>
</dbReference>
<dbReference type="neXtProt" id="NX_Q86VW1"/>
<dbReference type="OpenTargets" id="ENSG00000004809"/>
<dbReference type="PharmGKB" id="PA134911502"/>
<dbReference type="VEuPathDB" id="HostDB:ENSG00000004809"/>
<dbReference type="eggNOG" id="KOG0255">
    <property type="taxonomic scope" value="Eukaryota"/>
</dbReference>
<dbReference type="GeneTree" id="ENSGT00940000160723"/>
<dbReference type="InParanoid" id="Q86VW1"/>
<dbReference type="OMA" id="MEAYMGA"/>
<dbReference type="OrthoDB" id="2261376at2759"/>
<dbReference type="PAN-GO" id="Q86VW1">
    <property type="GO annotations" value="2 GO annotations based on evolutionary models"/>
</dbReference>
<dbReference type="PhylomeDB" id="Q86VW1"/>
<dbReference type="TreeFam" id="TF315847"/>
<dbReference type="PathwayCommons" id="Q86VW1"/>
<dbReference type="Reactome" id="R-HSA-549127">
    <property type="pathway name" value="Organic cation transport"/>
</dbReference>
<dbReference type="SignaLink" id="Q86VW1"/>
<dbReference type="BioGRID-ORCS" id="85413">
    <property type="hits" value="11 hits in 1147 CRISPR screens"/>
</dbReference>
<dbReference type="GenomeRNAi" id="85413"/>
<dbReference type="Pharos" id="Q86VW1">
    <property type="development level" value="Tbio"/>
</dbReference>
<dbReference type="PRO" id="PR:Q86VW1"/>
<dbReference type="Proteomes" id="UP000005640">
    <property type="component" value="Chromosome 6"/>
</dbReference>
<dbReference type="RNAct" id="Q86VW1">
    <property type="molecule type" value="protein"/>
</dbReference>
<dbReference type="Bgee" id="ENSG00000004809">
    <property type="expression patterns" value="Expressed in trabecular bone tissue and 112 other cell types or tissues"/>
</dbReference>
<dbReference type="ExpressionAtlas" id="Q86VW1">
    <property type="expression patterns" value="baseline and differential"/>
</dbReference>
<dbReference type="GO" id="GO:0005829">
    <property type="term" value="C:cytosol"/>
    <property type="evidence" value="ECO:0000314"/>
    <property type="project" value="HPA"/>
</dbReference>
<dbReference type="GO" id="GO:0016020">
    <property type="term" value="C:membrane"/>
    <property type="evidence" value="ECO:0000314"/>
    <property type="project" value="UniProtKB"/>
</dbReference>
<dbReference type="GO" id="GO:0005886">
    <property type="term" value="C:plasma membrane"/>
    <property type="evidence" value="ECO:0000314"/>
    <property type="project" value="HPA"/>
</dbReference>
<dbReference type="GO" id="GO:0005275">
    <property type="term" value="F:amine transmembrane transporter activity"/>
    <property type="evidence" value="ECO:0000314"/>
    <property type="project" value="MGI"/>
</dbReference>
<dbReference type="GO" id="GO:0015226">
    <property type="term" value="F:carnitine transmembrane transporter activity"/>
    <property type="evidence" value="ECO:0000314"/>
    <property type="project" value="UniProtKB"/>
</dbReference>
<dbReference type="GO" id="GO:0015101">
    <property type="term" value="F:organic cation transmembrane transporter activity"/>
    <property type="evidence" value="ECO:0000314"/>
    <property type="project" value="UniProtKB"/>
</dbReference>
<dbReference type="GO" id="GO:0015606">
    <property type="term" value="F:spermidine transmembrane transporter activity"/>
    <property type="evidence" value="ECO:0000314"/>
    <property type="project" value="UniProtKB"/>
</dbReference>
<dbReference type="GO" id="GO:0046717">
    <property type="term" value="P:acid secretion"/>
    <property type="evidence" value="ECO:0000314"/>
    <property type="project" value="UniProtKB"/>
</dbReference>
<dbReference type="GO" id="GO:1902603">
    <property type="term" value="P:carnitine transmembrane transport"/>
    <property type="evidence" value="ECO:0000314"/>
    <property type="project" value="UniProtKB"/>
</dbReference>
<dbReference type="GO" id="GO:0015879">
    <property type="term" value="P:carnitine transport"/>
    <property type="evidence" value="ECO:0000314"/>
    <property type="project" value="UniProtKB"/>
</dbReference>
<dbReference type="GO" id="GO:0030154">
    <property type="term" value="P:cell differentiation"/>
    <property type="evidence" value="ECO:0007669"/>
    <property type="project" value="UniProtKB-KW"/>
</dbReference>
<dbReference type="GO" id="GO:0030317">
    <property type="term" value="P:flagellated sperm motility"/>
    <property type="evidence" value="ECO:0000315"/>
    <property type="project" value="UniProtKB"/>
</dbReference>
<dbReference type="GO" id="GO:0006811">
    <property type="term" value="P:monoatomic ion transport"/>
    <property type="evidence" value="ECO:0007669"/>
    <property type="project" value="UniProtKB-KW"/>
</dbReference>
<dbReference type="GO" id="GO:0015695">
    <property type="term" value="P:organic cation transport"/>
    <property type="evidence" value="ECO:0000314"/>
    <property type="project" value="UniProtKB"/>
</dbReference>
<dbReference type="GO" id="GO:0007338">
    <property type="term" value="P:single fertilization"/>
    <property type="evidence" value="ECO:0000315"/>
    <property type="project" value="UniProtKB"/>
</dbReference>
<dbReference type="GO" id="GO:0007283">
    <property type="term" value="P:spermatogenesis"/>
    <property type="evidence" value="ECO:0007669"/>
    <property type="project" value="UniProtKB-KW"/>
</dbReference>
<dbReference type="GO" id="GO:1903711">
    <property type="term" value="P:spermidine transmembrane transport"/>
    <property type="evidence" value="ECO:0000314"/>
    <property type="project" value="UniProtKB"/>
</dbReference>
<dbReference type="CDD" id="cd17375">
    <property type="entry name" value="MFS_SLC22A16_CT2"/>
    <property type="match status" value="1"/>
</dbReference>
<dbReference type="FunFam" id="1.20.1250.20:FF:000154">
    <property type="entry name" value="Solute carrier family 22 member 16"/>
    <property type="match status" value="1"/>
</dbReference>
<dbReference type="Gene3D" id="1.20.1250.20">
    <property type="entry name" value="MFS general substrate transporter like domains"/>
    <property type="match status" value="1"/>
</dbReference>
<dbReference type="InterPro" id="IPR020846">
    <property type="entry name" value="MFS_dom"/>
</dbReference>
<dbReference type="InterPro" id="IPR005828">
    <property type="entry name" value="MFS_sugar_transport-like"/>
</dbReference>
<dbReference type="InterPro" id="IPR036259">
    <property type="entry name" value="MFS_trans_sf"/>
</dbReference>
<dbReference type="PANTHER" id="PTHR24064">
    <property type="entry name" value="SOLUTE CARRIER FAMILY 22 MEMBER"/>
    <property type="match status" value="1"/>
</dbReference>
<dbReference type="Pfam" id="PF00083">
    <property type="entry name" value="Sugar_tr"/>
    <property type="match status" value="1"/>
</dbReference>
<dbReference type="SUPFAM" id="SSF103473">
    <property type="entry name" value="MFS general substrate transporter"/>
    <property type="match status" value="1"/>
</dbReference>
<dbReference type="PROSITE" id="PS50850">
    <property type="entry name" value="MFS"/>
    <property type="match status" value="1"/>
</dbReference>
<reference key="1">
    <citation type="journal article" date="2002" name="Biochem. Biophys. Res. Commun.">
        <title>Novel human cDNAs homologous to Drosophila Orct and mammalian carnitine transporters.</title>
        <authorList>
            <person name="Eraly S.A."/>
            <person name="Nigam S.K."/>
        </authorList>
    </citation>
    <scope>NUCLEOTIDE SEQUENCE [MRNA] (ISOFORM 1)</scope>
    <scope>VARIANT THR-409</scope>
    <scope>TISSUE SPECIFICITY</scope>
    <source>
        <tissue>Kidney</tissue>
    </source>
</reference>
<reference key="2">
    <citation type="journal article" date="2002" name="Exp. Hematol.">
        <title>Identification of OCT6 as a novel organic cation transporter prefrentially expressed in hematopoietic cells and leukemias.</title>
        <authorList>
            <person name="Gong S."/>
            <person name="Lu X."/>
            <person name="Xu Y."/>
            <person name="Swiderski C.F."/>
            <person name="Jordan C.T."/>
            <person name="Moscow J.A."/>
        </authorList>
    </citation>
    <scope>NUCLEOTIDE SEQUENCE [MRNA]</scope>
    <scope>TISSUE SPECIFICITY</scope>
    <scope>VARIANT THR-409</scope>
</reference>
<reference key="3">
    <citation type="journal article" date="2002" name="J. Biol. Chem.">
        <title>Molecular identification of a novel carnitine transporter specific to human testis. Insights into the mechanism of carnitine recognition.</title>
        <authorList>
            <person name="Enomoto A."/>
            <person name="Wempe M.F."/>
            <person name="Tsuchida H."/>
            <person name="Shin H.J."/>
            <person name="Cha S.H."/>
            <person name="Anzai N."/>
            <person name="Goto A."/>
            <person name="Sakamoto A."/>
            <person name="Niwa T."/>
            <person name="Kanai Y."/>
            <person name="Anders M.W."/>
            <person name="Endou H."/>
        </authorList>
    </citation>
    <scope>NUCLEOTIDE SEQUENCE [MRNA] (ISOFORM 2)</scope>
    <scope>FUNCTION</scope>
    <scope>TRANSPORTER ACTIVITY</scope>
    <scope>BIOPHYSICOCHEMICAL PROPERTIES</scope>
    <scope>SUBCELLULAR LOCATION</scope>
    <scope>TISSUE SPECIFICITY</scope>
</reference>
<reference key="4">
    <citation type="journal article" date="2005" name="Biochem. Biophys. Res. Commun.">
        <title>Characterization of the organic cation transporter SLC22A16: a doxorubicin importer.</title>
        <authorList>
            <person name="Okabe M."/>
            <person name="Unno M."/>
            <person name="Harigae H."/>
            <person name="Kaku M."/>
            <person name="Okitsu Y."/>
            <person name="Sasaki T."/>
            <person name="Mizoi T."/>
            <person name="Shiiba K."/>
            <person name="Takanaga H."/>
            <person name="Terasaki T."/>
            <person name="Matsuno S."/>
            <person name="Sasaki I."/>
            <person name="Ito S."/>
            <person name="Abe T."/>
        </authorList>
    </citation>
    <scope>NUCLEOTIDE SEQUENCE [MRNA] (ISOFORM 1)</scope>
    <scope>TISSUE SPECIFICITY</scope>
    <scope>VARIANT THR-409</scope>
    <scope>MISCELLANEOUS</scope>
</reference>
<reference key="5">
    <citation type="journal article" date="2003" name="Nature">
        <title>The DNA sequence and analysis of human chromosome 6.</title>
        <authorList>
            <person name="Mungall A.J."/>
            <person name="Palmer S.A."/>
            <person name="Sims S.K."/>
            <person name="Edwards C.A."/>
            <person name="Ashurst J.L."/>
            <person name="Wilming L."/>
            <person name="Jones M.C."/>
            <person name="Horton R."/>
            <person name="Hunt S.E."/>
            <person name="Scott C.E."/>
            <person name="Gilbert J.G.R."/>
            <person name="Clamp M.E."/>
            <person name="Bethel G."/>
            <person name="Milne S."/>
            <person name="Ainscough R."/>
            <person name="Almeida J.P."/>
            <person name="Ambrose K.D."/>
            <person name="Andrews T.D."/>
            <person name="Ashwell R.I.S."/>
            <person name="Babbage A.K."/>
            <person name="Bagguley C.L."/>
            <person name="Bailey J."/>
            <person name="Banerjee R."/>
            <person name="Barker D.J."/>
            <person name="Barlow K.F."/>
            <person name="Bates K."/>
            <person name="Beare D.M."/>
            <person name="Beasley H."/>
            <person name="Beasley O."/>
            <person name="Bird C.P."/>
            <person name="Blakey S.E."/>
            <person name="Bray-Allen S."/>
            <person name="Brook J."/>
            <person name="Brown A.J."/>
            <person name="Brown J.Y."/>
            <person name="Burford D.C."/>
            <person name="Burrill W."/>
            <person name="Burton J."/>
            <person name="Carder C."/>
            <person name="Carter N.P."/>
            <person name="Chapman J.C."/>
            <person name="Clark S.Y."/>
            <person name="Clark G."/>
            <person name="Clee C.M."/>
            <person name="Clegg S."/>
            <person name="Cobley V."/>
            <person name="Collier R.E."/>
            <person name="Collins J.E."/>
            <person name="Colman L.K."/>
            <person name="Corby N.R."/>
            <person name="Coville G.J."/>
            <person name="Culley K.M."/>
            <person name="Dhami P."/>
            <person name="Davies J."/>
            <person name="Dunn M."/>
            <person name="Earthrowl M.E."/>
            <person name="Ellington A.E."/>
            <person name="Evans K.A."/>
            <person name="Faulkner L."/>
            <person name="Francis M.D."/>
            <person name="Frankish A."/>
            <person name="Frankland J."/>
            <person name="French L."/>
            <person name="Garner P."/>
            <person name="Garnett J."/>
            <person name="Ghori M.J."/>
            <person name="Gilby L.M."/>
            <person name="Gillson C.J."/>
            <person name="Glithero R.J."/>
            <person name="Grafham D.V."/>
            <person name="Grant M."/>
            <person name="Gribble S."/>
            <person name="Griffiths C."/>
            <person name="Griffiths M.N.D."/>
            <person name="Hall R."/>
            <person name="Halls K.S."/>
            <person name="Hammond S."/>
            <person name="Harley J.L."/>
            <person name="Hart E.A."/>
            <person name="Heath P.D."/>
            <person name="Heathcott R."/>
            <person name="Holmes S.J."/>
            <person name="Howden P.J."/>
            <person name="Howe K.L."/>
            <person name="Howell G.R."/>
            <person name="Huckle E."/>
            <person name="Humphray S.J."/>
            <person name="Humphries M.D."/>
            <person name="Hunt A.R."/>
            <person name="Johnson C.M."/>
            <person name="Joy A.A."/>
            <person name="Kay M."/>
            <person name="Keenan S.J."/>
            <person name="Kimberley A.M."/>
            <person name="King A."/>
            <person name="Laird G.K."/>
            <person name="Langford C."/>
            <person name="Lawlor S."/>
            <person name="Leongamornlert D.A."/>
            <person name="Leversha M."/>
            <person name="Lloyd C.R."/>
            <person name="Lloyd D.M."/>
            <person name="Loveland J.E."/>
            <person name="Lovell J."/>
            <person name="Martin S."/>
            <person name="Mashreghi-Mohammadi M."/>
            <person name="Maslen G.L."/>
            <person name="Matthews L."/>
            <person name="McCann O.T."/>
            <person name="McLaren S.J."/>
            <person name="McLay K."/>
            <person name="McMurray A."/>
            <person name="Moore M.J.F."/>
            <person name="Mullikin J.C."/>
            <person name="Niblett D."/>
            <person name="Nickerson T."/>
            <person name="Novik K.L."/>
            <person name="Oliver K."/>
            <person name="Overton-Larty E.K."/>
            <person name="Parker A."/>
            <person name="Patel R."/>
            <person name="Pearce A.V."/>
            <person name="Peck A.I."/>
            <person name="Phillimore B.J.C.T."/>
            <person name="Phillips S."/>
            <person name="Plumb R.W."/>
            <person name="Porter K.M."/>
            <person name="Ramsey Y."/>
            <person name="Ranby S.A."/>
            <person name="Rice C.M."/>
            <person name="Ross M.T."/>
            <person name="Searle S.M."/>
            <person name="Sehra H.K."/>
            <person name="Sheridan E."/>
            <person name="Skuce C.D."/>
            <person name="Smith S."/>
            <person name="Smith M."/>
            <person name="Spraggon L."/>
            <person name="Squares S.L."/>
            <person name="Steward C.A."/>
            <person name="Sycamore N."/>
            <person name="Tamlyn-Hall G."/>
            <person name="Tester J."/>
            <person name="Theaker A.J."/>
            <person name="Thomas D.W."/>
            <person name="Thorpe A."/>
            <person name="Tracey A."/>
            <person name="Tromans A."/>
            <person name="Tubby B."/>
            <person name="Wall M."/>
            <person name="Wallis J.M."/>
            <person name="West A.P."/>
            <person name="White S.S."/>
            <person name="Whitehead S.L."/>
            <person name="Whittaker H."/>
            <person name="Wild A."/>
            <person name="Willey D.J."/>
            <person name="Wilmer T.E."/>
            <person name="Wood J.M."/>
            <person name="Wray P.W."/>
            <person name="Wyatt J.C."/>
            <person name="Young L."/>
            <person name="Younger R.M."/>
            <person name="Bentley D.R."/>
            <person name="Coulson A."/>
            <person name="Durbin R.M."/>
            <person name="Hubbard T."/>
            <person name="Sulston J.E."/>
            <person name="Dunham I."/>
            <person name="Rogers J."/>
            <person name="Beck S."/>
        </authorList>
    </citation>
    <scope>NUCLEOTIDE SEQUENCE [LARGE SCALE GENOMIC DNA]</scope>
</reference>
<reference key="6">
    <citation type="submission" date="2005-09" db="EMBL/GenBank/DDBJ databases">
        <authorList>
            <person name="Mural R.J."/>
            <person name="Istrail S."/>
            <person name="Sutton G.G."/>
            <person name="Florea L."/>
            <person name="Halpern A.L."/>
            <person name="Mobarry C.M."/>
            <person name="Lippert R."/>
            <person name="Walenz B."/>
            <person name="Shatkay H."/>
            <person name="Dew I."/>
            <person name="Miller J.R."/>
            <person name="Flanigan M.J."/>
            <person name="Edwards N.J."/>
            <person name="Bolanos R."/>
            <person name="Fasulo D."/>
            <person name="Halldorsson B.V."/>
            <person name="Hannenhalli S."/>
            <person name="Turner R."/>
            <person name="Yooseph S."/>
            <person name="Lu F."/>
            <person name="Nusskern D.R."/>
            <person name="Shue B.C."/>
            <person name="Zheng X.H."/>
            <person name="Zhong F."/>
            <person name="Delcher A.L."/>
            <person name="Huson D.H."/>
            <person name="Kravitz S.A."/>
            <person name="Mouchard L."/>
            <person name="Reinert K."/>
            <person name="Remington K.A."/>
            <person name="Clark A.G."/>
            <person name="Waterman M.S."/>
            <person name="Eichler E.E."/>
            <person name="Adams M.D."/>
            <person name="Hunkapiller M.W."/>
            <person name="Myers E.W."/>
            <person name="Venter J.C."/>
        </authorList>
    </citation>
    <scope>NUCLEOTIDE SEQUENCE [LARGE SCALE GENOMIC DNA]</scope>
</reference>
<reference key="7">
    <citation type="journal article" date="2004" name="Genome Res.">
        <title>The status, quality, and expansion of the NIH full-length cDNA project: the Mammalian Gene Collection (MGC).</title>
        <authorList>
            <consortium name="The MGC Project Team"/>
        </authorList>
    </citation>
    <scope>NUCLEOTIDE SEQUENCE [LARGE SCALE MRNA] (ISOFORM 1)</scope>
    <source>
        <tissue>Testis</tissue>
    </source>
</reference>
<reference key="8">
    <citation type="journal article" date="2004" name="Nat. Genet.">
        <title>Complete sequencing and characterization of 21,243 full-length human cDNAs.</title>
        <authorList>
            <person name="Ota T."/>
            <person name="Suzuki Y."/>
            <person name="Nishikawa T."/>
            <person name="Otsuki T."/>
            <person name="Sugiyama T."/>
            <person name="Irie R."/>
            <person name="Wakamatsu A."/>
            <person name="Hayashi K."/>
            <person name="Sato H."/>
            <person name="Nagai K."/>
            <person name="Kimura K."/>
            <person name="Makita H."/>
            <person name="Sekine M."/>
            <person name="Obayashi M."/>
            <person name="Nishi T."/>
            <person name="Shibahara T."/>
            <person name="Tanaka T."/>
            <person name="Ishii S."/>
            <person name="Yamamoto J."/>
            <person name="Saito K."/>
            <person name="Kawai Y."/>
            <person name="Isono Y."/>
            <person name="Nakamura Y."/>
            <person name="Nagahari K."/>
            <person name="Murakami K."/>
            <person name="Yasuda T."/>
            <person name="Iwayanagi T."/>
            <person name="Wagatsuma M."/>
            <person name="Shiratori A."/>
            <person name="Sudo H."/>
            <person name="Hosoiri T."/>
            <person name="Kaku Y."/>
            <person name="Kodaira H."/>
            <person name="Kondo H."/>
            <person name="Sugawara M."/>
            <person name="Takahashi M."/>
            <person name="Kanda K."/>
            <person name="Yokoi T."/>
            <person name="Furuya T."/>
            <person name="Kikkawa E."/>
            <person name="Omura Y."/>
            <person name="Abe K."/>
            <person name="Kamihara K."/>
            <person name="Katsuta N."/>
            <person name="Sato K."/>
            <person name="Tanikawa M."/>
            <person name="Yamazaki M."/>
            <person name="Ninomiya K."/>
            <person name="Ishibashi T."/>
            <person name="Yamashita H."/>
            <person name="Murakawa K."/>
            <person name="Fujimori K."/>
            <person name="Tanai H."/>
            <person name="Kimata M."/>
            <person name="Watanabe M."/>
            <person name="Hiraoka S."/>
            <person name="Chiba Y."/>
            <person name="Ishida S."/>
            <person name="Ono Y."/>
            <person name="Takiguchi S."/>
            <person name="Watanabe S."/>
            <person name="Yosida M."/>
            <person name="Hotuta T."/>
            <person name="Kusano J."/>
            <person name="Kanehori K."/>
            <person name="Takahashi-Fujii A."/>
            <person name="Hara H."/>
            <person name="Tanase T.-O."/>
            <person name="Nomura Y."/>
            <person name="Togiya S."/>
            <person name="Komai F."/>
            <person name="Hara R."/>
            <person name="Takeuchi K."/>
            <person name="Arita M."/>
            <person name="Imose N."/>
            <person name="Musashino K."/>
            <person name="Yuuki H."/>
            <person name="Oshima A."/>
            <person name="Sasaki N."/>
            <person name="Aotsuka S."/>
            <person name="Yoshikawa Y."/>
            <person name="Matsunawa H."/>
            <person name="Ichihara T."/>
            <person name="Shiohata N."/>
            <person name="Sano S."/>
            <person name="Moriya S."/>
            <person name="Momiyama H."/>
            <person name="Satoh N."/>
            <person name="Takami S."/>
            <person name="Terashima Y."/>
            <person name="Suzuki O."/>
            <person name="Nakagawa S."/>
            <person name="Senoh A."/>
            <person name="Mizoguchi H."/>
            <person name="Goto Y."/>
            <person name="Shimizu F."/>
            <person name="Wakebe H."/>
            <person name="Hishigaki H."/>
            <person name="Watanabe T."/>
            <person name="Sugiyama A."/>
            <person name="Takemoto M."/>
            <person name="Kawakami B."/>
            <person name="Yamazaki M."/>
            <person name="Watanabe K."/>
            <person name="Kumagai A."/>
            <person name="Itakura S."/>
            <person name="Fukuzumi Y."/>
            <person name="Fujimori Y."/>
            <person name="Komiyama M."/>
            <person name="Tashiro H."/>
            <person name="Tanigami A."/>
            <person name="Fujiwara T."/>
            <person name="Ono T."/>
            <person name="Yamada K."/>
            <person name="Fujii Y."/>
            <person name="Ozaki K."/>
            <person name="Hirao M."/>
            <person name="Ohmori Y."/>
            <person name="Kawabata A."/>
            <person name="Hikiji T."/>
            <person name="Kobatake N."/>
            <person name="Inagaki H."/>
            <person name="Ikema Y."/>
            <person name="Okamoto S."/>
            <person name="Okitani R."/>
            <person name="Kawakami T."/>
            <person name="Noguchi S."/>
            <person name="Itoh T."/>
            <person name="Shigeta K."/>
            <person name="Senba T."/>
            <person name="Matsumura K."/>
            <person name="Nakajima Y."/>
            <person name="Mizuno T."/>
            <person name="Morinaga M."/>
            <person name="Sasaki M."/>
            <person name="Togashi T."/>
            <person name="Oyama M."/>
            <person name="Hata H."/>
            <person name="Watanabe M."/>
            <person name="Komatsu T."/>
            <person name="Mizushima-Sugano J."/>
            <person name="Satoh T."/>
            <person name="Shirai Y."/>
            <person name="Takahashi Y."/>
            <person name="Nakagawa K."/>
            <person name="Okumura K."/>
            <person name="Nagase T."/>
            <person name="Nomura N."/>
            <person name="Kikuchi H."/>
            <person name="Masuho Y."/>
            <person name="Yamashita R."/>
            <person name="Nakai K."/>
            <person name="Yada T."/>
            <person name="Nakamura Y."/>
            <person name="Ohara O."/>
            <person name="Isogai T."/>
            <person name="Sugano S."/>
        </authorList>
    </citation>
    <scope>NUCLEOTIDE SEQUENCE [LARGE SCALE MRNA] OF 84-577 (ISOFORM 3)</scope>
    <scope>VARIANT THR-409</scope>
    <source>
        <tissue>Testis</tissue>
    </source>
</reference>
<reference key="9">
    <citation type="journal article" date="2007" name="Int. J. Gynecol. Pathol.">
        <title>Expression of organic cation transporter SLC22A16 in human endometria.</title>
        <authorList>
            <person name="Sato N."/>
            <person name="Ito K."/>
            <person name="Onogawa T."/>
            <person name="Akahira J."/>
            <person name="Unno M."/>
            <person name="Abe T."/>
            <person name="Niikura H."/>
            <person name="Yaegashi N."/>
        </authorList>
    </citation>
    <scope>TISSUE SPECIFICITY</scope>
</reference>
<reference key="10">
    <citation type="journal article" date="2007" name="Int. J. Gynecol. Pathol.">
        <title>Expression of organic cation transporter SLC22A16 in human epithelial ovarian cancer: a possible role of the adriamycin importer.</title>
        <authorList>
            <person name="Ota K."/>
            <person name="Ito K."/>
            <person name="Akahira J."/>
            <person name="Sato N."/>
            <person name="Onogawa T."/>
            <person name="Moriya T."/>
            <person name="Unno M."/>
            <person name="Abe T."/>
            <person name="Niikura H."/>
            <person name="Takano T."/>
            <person name="Yaegashi N."/>
        </authorList>
    </citation>
    <scope>TISSUE SPECIFICITY</scope>
</reference>
<reference key="11">
    <citation type="journal article" date="2010" name="J. Biol. Chem.">
        <title>The human carnitine transporter SLC22A16 mediates high affinity uptake of the anticancer polyamine analogue bleomycin-A5.</title>
        <authorList>
            <person name="Aouida M."/>
            <person name="Poulin R."/>
            <person name="Ramotar D."/>
        </authorList>
    </citation>
    <scope>FUNCTION</scope>
    <scope>TRANSPORTER ACTIVITY</scope>
    <scope>BIOPHYSICOCHEMICAL PROPERTIES</scope>
    <scope>SUBCELLULAR LOCATION</scope>
    <scope>TISSUE SPECIFICITY</scope>
    <scope>MISCELLANEOUS</scope>
</reference>
<comment type="function">
    <text evidence="3 10">Facilitative organic cation transporter that mediates the transport of carnitine as well as the polyamine spermidine (PubMed:12089149, PubMed:20037140). Mediates the partially Na(+)-dependent bidirectional transport of carnitine (PubMed:12089149). May mediate L-carnitine secretion from testis epididymal epithelium into the lumen which is involved in the maturation of spermatozoa (PubMed:12089149).</text>
</comment>
<comment type="catalytic activity">
    <reaction evidence="3 10">
        <text>(R)-carnitine(in) = (R)-carnitine(out)</text>
        <dbReference type="Rhea" id="RHEA:34959"/>
        <dbReference type="ChEBI" id="CHEBI:16347"/>
    </reaction>
</comment>
<comment type="catalytic activity">
    <reaction evidence="10">
        <text>spermidine(in) = spermidine(out)</text>
        <dbReference type="Rhea" id="RHEA:35039"/>
        <dbReference type="ChEBI" id="CHEBI:57834"/>
    </reaction>
</comment>
<comment type="biophysicochemical properties">
    <kinetics>
        <KM evidence="3">20.3 uM for L-carnitine</KM>
        <KM evidence="10">8 uM for L-carnitine</KM>
        <KM evidence="10">0.35 uM for spermidine</KM>
    </kinetics>
    <phDependence>
        <text evidence="3">Optimum pH is 8.5 for carnitine uptake and transport efficiency decreased at more acidic pHs.</text>
    </phDependence>
</comment>
<comment type="subcellular location">
    <subcellularLocation>
        <location evidence="3 10">Cell membrane</location>
        <topology evidence="15">Multi-pass membrane protein</topology>
    </subcellularLocation>
    <text evidence="3">Detected in the plasma membrane of Sertoli cells and in the luminal membrane of epithelial cells in the epididymis.</text>
</comment>
<comment type="alternative products">
    <event type="alternative splicing"/>
    <isoform>
        <id>Q86VW1-1</id>
        <name>1</name>
        <sequence type="displayed"/>
    </isoform>
    <isoform>
        <id>Q86VW1-2</id>
        <name>2</name>
        <sequence type="described" ref="VSP_031336 VSP_031337"/>
    </isoform>
    <isoform>
        <id>Q86VW1-3</id>
        <name>3</name>
        <sequence type="described" ref="VSP_031338"/>
    </isoform>
</comment>
<comment type="tissue specificity">
    <text evidence="3 4 5 7 8 9">Expressed in testis and epididymis (at protein level) (PubMed:12089149, PubMed:12384147, PubMed:15963465). Expressed in endometrium (at protein level); highly expressed during the normal secretory phase, but expression is significantly reduced in the proliferative phase (PubMed:17197897). Expressed at lower levels in adult tissues including bone marrow (at protein level) (PubMed:12372408, PubMed:12384147, PubMed:15963465). Expressed in hematopoietic cells, including CD34(+) leukocytes (PubMed:12384147). Expressed in fetal liver (at protein level), brain, lung, kidney, heart, skeletal muscle, spleen and thymus (PubMed:12372408, PubMed:12384147, PubMed:15963465). Expressed in leukemia cells (PubMed:12384147). Abundantly expressed in ovarian cancer clear-cell adenocarcinoma (PubMed:17581421).</text>
</comment>
<comment type="miscellaneous">
    <text evidence="7 10">Involved in the uptake of clinically used drugs such as anticancer agents doxorubicin and bleomycin.</text>
</comment>
<comment type="similarity">
    <text evidence="15">Belongs to the major facilitator (TC 2.A.1) superfamily. Organic cation transporter (TC 2.A.1.19) family.</text>
</comment>
<comment type="sequence caution" evidence="15">
    <conflict type="erroneous initiation">
        <sequence resource="EMBL-CDS" id="BAB71419"/>
    </conflict>
</comment>
<name>S22AG_HUMAN</name>
<keyword id="KW-0025">Alternative splicing</keyword>
<keyword id="KW-1003">Cell membrane</keyword>
<keyword id="KW-0217">Developmental protein</keyword>
<keyword id="KW-0221">Differentiation</keyword>
<keyword id="KW-0325">Glycoprotein</keyword>
<keyword id="KW-0406">Ion transport</keyword>
<keyword id="KW-0472">Membrane</keyword>
<keyword id="KW-1267">Proteomics identification</keyword>
<keyword id="KW-1185">Reference proteome</keyword>
<keyword id="KW-0744">Spermatogenesis</keyword>
<keyword id="KW-0812">Transmembrane</keyword>
<keyword id="KW-1133">Transmembrane helix</keyword>
<keyword id="KW-0813">Transport</keyword>
<gene>
    <name evidence="16" type="primary">SLC22A16</name>
    <name type="synonym">OCT6</name>
</gene>
<sequence length="577" mass="64614">MGSRHFEGIYDHVGHFGRFQRVLYFICAFQNISCGIHYLASVFMGVTPHHVCRPPGNVSQVVFHNHSNWSLEDTGALLSSGQKDYVTVQLQNGEIWELSRCSRNKRENTSSLGYEYTGSKKEFPCVDGYIYDQNTWKSTAVTQWNLVCDRKWLAMLIQPLFMFGVLLGSVTFGYFSDRLGRRVVLWATSSSMFLFGIAAAFAVDYYTFMAARFFLAMVASGYLVVGFVYVMEFIGMKSRTWASVHLHSFFAVGTLLVALTGYLVRTWWLYQMILSTVTVPFILCCWVLPETPFWLLSEGRYEEAQKIVDIMAKWNRASSCKLSELLSLDLQGPVSNSPTEVQKHNLSYLFYNWSITKRTLTVWLIWFTGSLGFYSFSLNSVNLGGNEYLNLFLLGVVEIPAYTFVCIAMDKVGRRTVLAYSLFCSALACGVVMVIPQKHYILGVVTAMVGKFAIGAAFGLIYLYTAELYPTIVRSLAVGSGSMVCRLASILAPFSVDLSSIWIFIPQLFVGTMALLSGVLTLKLPETLGKRLATTWEEAAKLESENESKSSKLLLTTNNSGLEKTEAITPRDSGLGE</sequence>